<reference key="1">
    <citation type="submission" date="1998-08" db="EMBL/GenBank/DDBJ databases">
        <title>Ammonium uptake in Corynebacterium glutamicum is regulated on the level of expression and enzyme activity.</title>
        <authorList>
            <person name="Jakoby M.J."/>
            <person name="Burkovski A."/>
            <person name="Meier-Wagner J."/>
        </authorList>
    </citation>
    <scope>NUCLEOTIDE SEQUENCE [GENOMIC DNA]</scope>
    <source>
        <strain>ATCC 13032 / DSM 20300 / JCM 1318 / BCRC 11384 / CCUG 27702 / LMG 3730 / NBRC 12168 / NCIMB 10025 / NRRL B-2784 / 534</strain>
    </source>
</reference>
<reference key="2">
    <citation type="journal article" date="2003" name="Appl. Microbiol. Biotechnol.">
        <title>The Corynebacterium glutamicum genome: features and impacts on biotechnological processes.</title>
        <authorList>
            <person name="Ikeda M."/>
            <person name="Nakagawa S."/>
        </authorList>
    </citation>
    <scope>NUCLEOTIDE SEQUENCE [LARGE SCALE GENOMIC DNA]</scope>
    <source>
        <strain>ATCC 13032 / DSM 20300 / JCM 1318 / BCRC 11384 / CCUG 27702 / LMG 3730 / NBRC 12168 / NCIMB 10025 / NRRL B-2784 / 534</strain>
    </source>
</reference>
<reference key="3">
    <citation type="journal article" date="2003" name="J. Biotechnol.">
        <title>The complete Corynebacterium glutamicum ATCC 13032 genome sequence and its impact on the production of L-aspartate-derived amino acids and vitamins.</title>
        <authorList>
            <person name="Kalinowski J."/>
            <person name="Bathe B."/>
            <person name="Bartels D."/>
            <person name="Bischoff N."/>
            <person name="Bott M."/>
            <person name="Burkovski A."/>
            <person name="Dusch N."/>
            <person name="Eggeling L."/>
            <person name="Eikmanns B.J."/>
            <person name="Gaigalat L."/>
            <person name="Goesmann A."/>
            <person name="Hartmann M."/>
            <person name="Huthmacher K."/>
            <person name="Kraemer R."/>
            <person name="Linke B."/>
            <person name="McHardy A.C."/>
            <person name="Meyer F."/>
            <person name="Moeckel B."/>
            <person name="Pfefferle W."/>
            <person name="Puehler A."/>
            <person name="Rey D.A."/>
            <person name="Rueckert C."/>
            <person name="Rupp O."/>
            <person name="Sahm H."/>
            <person name="Wendisch V.F."/>
            <person name="Wiegraebe I."/>
            <person name="Tauch A."/>
        </authorList>
    </citation>
    <scope>NUCLEOTIDE SEQUENCE [LARGE SCALE GENOMIC DNA]</scope>
    <source>
        <strain>ATCC 13032 / DSM 20300 / JCM 1318 / BCRC 11384 / CCUG 27702 / LMG 3730 / NBRC 12168 / NCIMB 10025 / NRRL B-2784 / 534</strain>
    </source>
</reference>
<gene>
    <name type="primary">secG</name>
    <name type="ordered locus">Cgl1584</name>
    <name type="ordered locus">cg1786</name>
</gene>
<proteinExistence type="inferred from homology"/>
<comment type="function">
    <text evidence="1">Involved in protein export. Participates in an early event of protein translocation (By similarity).</text>
</comment>
<comment type="subcellular location">
    <subcellularLocation>
        <location evidence="1">Cell membrane</location>
        <topology evidence="1">Multi-pass membrane protein</topology>
    </subcellularLocation>
</comment>
<comment type="similarity">
    <text evidence="3">Belongs to the SecG family.</text>
</comment>
<accession>Q9Z469</accession>
<name>SECG_CORGL</name>
<protein>
    <recommendedName>
        <fullName>Protein-export membrane protein SecG</fullName>
    </recommendedName>
</protein>
<dbReference type="EMBL" id="AJ007732">
    <property type="protein sequence ID" value="CAA07632.1"/>
    <property type="molecule type" value="Genomic_DNA"/>
</dbReference>
<dbReference type="EMBL" id="BA000036">
    <property type="protein sequence ID" value="BAB98977.1"/>
    <property type="molecule type" value="Genomic_DNA"/>
</dbReference>
<dbReference type="EMBL" id="BX927152">
    <property type="protein sequence ID" value="CAF21592.1"/>
    <property type="molecule type" value="Genomic_DNA"/>
</dbReference>
<dbReference type="RefSeq" id="NP_600798.1">
    <property type="nucleotide sequence ID" value="NC_003450.3"/>
</dbReference>
<dbReference type="RefSeq" id="WP_011014464.1">
    <property type="nucleotide sequence ID" value="NC_006958.1"/>
</dbReference>
<dbReference type="SMR" id="Q9Z469"/>
<dbReference type="STRING" id="196627.cg1786"/>
<dbReference type="GeneID" id="1019552"/>
<dbReference type="KEGG" id="cgb:cg1786"/>
<dbReference type="KEGG" id="cgl:Cgl1584"/>
<dbReference type="PATRIC" id="fig|196627.13.peg.1545"/>
<dbReference type="eggNOG" id="COG1314">
    <property type="taxonomic scope" value="Bacteria"/>
</dbReference>
<dbReference type="HOGENOM" id="CLU_094156_7_1_11"/>
<dbReference type="OrthoDB" id="4337190at2"/>
<dbReference type="BioCyc" id="CORYNE:G18NG-11169-MONOMER"/>
<dbReference type="Proteomes" id="UP000000582">
    <property type="component" value="Chromosome"/>
</dbReference>
<dbReference type="Proteomes" id="UP000001009">
    <property type="component" value="Chromosome"/>
</dbReference>
<dbReference type="GO" id="GO:0005886">
    <property type="term" value="C:plasma membrane"/>
    <property type="evidence" value="ECO:0007669"/>
    <property type="project" value="UniProtKB-SubCell"/>
</dbReference>
<dbReference type="GO" id="GO:0015450">
    <property type="term" value="F:protein-transporting ATPase activity"/>
    <property type="evidence" value="ECO:0007669"/>
    <property type="project" value="InterPro"/>
</dbReference>
<dbReference type="GO" id="GO:0065002">
    <property type="term" value="P:intracellular protein transmembrane transport"/>
    <property type="evidence" value="ECO:0007669"/>
    <property type="project" value="TreeGrafter"/>
</dbReference>
<dbReference type="GO" id="GO:0009306">
    <property type="term" value="P:protein secretion"/>
    <property type="evidence" value="ECO:0007669"/>
    <property type="project" value="InterPro"/>
</dbReference>
<dbReference type="GO" id="GO:0043952">
    <property type="term" value="P:protein transport by the Sec complex"/>
    <property type="evidence" value="ECO:0007669"/>
    <property type="project" value="TreeGrafter"/>
</dbReference>
<dbReference type="InterPro" id="IPR004692">
    <property type="entry name" value="SecG"/>
</dbReference>
<dbReference type="NCBIfam" id="TIGR00810">
    <property type="entry name" value="secG"/>
    <property type="match status" value="1"/>
</dbReference>
<dbReference type="PANTHER" id="PTHR34182">
    <property type="entry name" value="PROTEIN-EXPORT MEMBRANE PROTEIN SECG"/>
    <property type="match status" value="1"/>
</dbReference>
<dbReference type="PANTHER" id="PTHR34182:SF1">
    <property type="entry name" value="PROTEIN-EXPORT MEMBRANE PROTEIN SECG"/>
    <property type="match status" value="1"/>
</dbReference>
<dbReference type="Pfam" id="PF03840">
    <property type="entry name" value="SecG"/>
    <property type="match status" value="1"/>
</dbReference>
<dbReference type="PRINTS" id="PR01651">
    <property type="entry name" value="SECGEXPORT"/>
</dbReference>
<evidence type="ECO:0000250" key="1"/>
<evidence type="ECO:0000255" key="2"/>
<evidence type="ECO:0000305" key="3"/>
<feature type="chain" id="PRO_0000157224" description="Protein-export membrane protein SecG">
    <location>
        <begin position="1"/>
        <end position="77"/>
    </location>
</feature>
<feature type="transmembrane region" description="Helical" evidence="2">
    <location>
        <begin position="2"/>
        <end position="22"/>
    </location>
</feature>
<feature type="transmembrane region" description="Helical" evidence="2">
    <location>
        <begin position="55"/>
        <end position="75"/>
    </location>
</feature>
<keyword id="KW-1003">Cell membrane</keyword>
<keyword id="KW-0472">Membrane</keyword>
<keyword id="KW-0653">Protein transport</keyword>
<keyword id="KW-1185">Reference proteome</keyword>
<keyword id="KW-0811">Translocation</keyword>
<keyword id="KW-0812">Transmembrane</keyword>
<keyword id="KW-1133">Transmembrane helix</keyword>
<keyword id="KW-0813">Transport</keyword>
<organism>
    <name type="scientific">Corynebacterium glutamicum (strain ATCC 13032 / DSM 20300 / JCM 1318 / BCRC 11384 / CCUG 27702 / LMG 3730 / NBRC 12168 / NCIMB 10025 / NRRL B-2784 / 534)</name>
    <dbReference type="NCBI Taxonomy" id="196627"/>
    <lineage>
        <taxon>Bacteria</taxon>
        <taxon>Bacillati</taxon>
        <taxon>Actinomycetota</taxon>
        <taxon>Actinomycetes</taxon>
        <taxon>Mycobacteriales</taxon>
        <taxon>Corynebacteriaceae</taxon>
        <taxon>Corynebacterium</taxon>
    </lineage>
</organism>
<sequence length="77" mass="8098">MALTLQIILVVASLLMTVFVLLHKGKGGGLSSLFGGGVQSNLSGSTVVEKNLDRVTILVAVIWIVCIVALNLIQTYS</sequence>